<reference key="1">
    <citation type="journal article" date="2002" name="Nature">
        <title>Sequence and analysis of chromosome 2 of Dictyostelium discoideum.</title>
        <authorList>
            <person name="Gloeckner G."/>
            <person name="Eichinger L."/>
            <person name="Szafranski K."/>
            <person name="Pachebat J.A."/>
            <person name="Bankier A.T."/>
            <person name="Dear P.H."/>
            <person name="Lehmann R."/>
            <person name="Baumgart C."/>
            <person name="Parra G."/>
            <person name="Abril J.F."/>
            <person name="Guigo R."/>
            <person name="Kumpf K."/>
            <person name="Tunggal B."/>
            <person name="Cox E.C."/>
            <person name="Quail M.A."/>
            <person name="Platzer M."/>
            <person name="Rosenthal A."/>
            <person name="Noegel A.A."/>
        </authorList>
    </citation>
    <scope>NUCLEOTIDE SEQUENCE [LARGE SCALE GENOMIC DNA]</scope>
    <source>
        <strain>AX4</strain>
    </source>
</reference>
<reference key="2">
    <citation type="journal article" date="2005" name="Nature">
        <title>The genome of the social amoeba Dictyostelium discoideum.</title>
        <authorList>
            <person name="Eichinger L."/>
            <person name="Pachebat J.A."/>
            <person name="Gloeckner G."/>
            <person name="Rajandream M.A."/>
            <person name="Sucgang R."/>
            <person name="Berriman M."/>
            <person name="Song J."/>
            <person name="Olsen R."/>
            <person name="Szafranski K."/>
            <person name="Xu Q."/>
            <person name="Tunggal B."/>
            <person name="Kummerfeld S."/>
            <person name="Madera M."/>
            <person name="Konfortov B.A."/>
            <person name="Rivero F."/>
            <person name="Bankier A.T."/>
            <person name="Lehmann R."/>
            <person name="Hamlin N."/>
            <person name="Davies R."/>
            <person name="Gaudet P."/>
            <person name="Fey P."/>
            <person name="Pilcher K."/>
            <person name="Chen G."/>
            <person name="Saunders D."/>
            <person name="Sodergren E.J."/>
            <person name="Davis P."/>
            <person name="Kerhornou A."/>
            <person name="Nie X."/>
            <person name="Hall N."/>
            <person name="Anjard C."/>
            <person name="Hemphill L."/>
            <person name="Bason N."/>
            <person name="Farbrother P."/>
            <person name="Desany B."/>
            <person name="Just E."/>
            <person name="Morio T."/>
            <person name="Rost R."/>
            <person name="Churcher C.M."/>
            <person name="Cooper J."/>
            <person name="Haydock S."/>
            <person name="van Driessche N."/>
            <person name="Cronin A."/>
            <person name="Goodhead I."/>
            <person name="Muzny D.M."/>
            <person name="Mourier T."/>
            <person name="Pain A."/>
            <person name="Lu M."/>
            <person name="Harper D."/>
            <person name="Lindsay R."/>
            <person name="Hauser H."/>
            <person name="James K.D."/>
            <person name="Quiles M."/>
            <person name="Madan Babu M."/>
            <person name="Saito T."/>
            <person name="Buchrieser C."/>
            <person name="Wardroper A."/>
            <person name="Felder M."/>
            <person name="Thangavelu M."/>
            <person name="Johnson D."/>
            <person name="Knights A."/>
            <person name="Loulseged H."/>
            <person name="Mungall K.L."/>
            <person name="Oliver K."/>
            <person name="Price C."/>
            <person name="Quail M.A."/>
            <person name="Urushihara H."/>
            <person name="Hernandez J."/>
            <person name="Rabbinowitsch E."/>
            <person name="Steffen D."/>
            <person name="Sanders M."/>
            <person name="Ma J."/>
            <person name="Kohara Y."/>
            <person name="Sharp S."/>
            <person name="Simmonds M.N."/>
            <person name="Spiegler S."/>
            <person name="Tivey A."/>
            <person name="Sugano S."/>
            <person name="White B."/>
            <person name="Walker D."/>
            <person name="Woodward J.R."/>
            <person name="Winckler T."/>
            <person name="Tanaka Y."/>
            <person name="Shaulsky G."/>
            <person name="Schleicher M."/>
            <person name="Weinstock G.M."/>
            <person name="Rosenthal A."/>
            <person name="Cox E.C."/>
            <person name="Chisholm R.L."/>
            <person name="Gibbs R.A."/>
            <person name="Loomis W.F."/>
            <person name="Platzer M."/>
            <person name="Kay R.R."/>
            <person name="Williams J.G."/>
            <person name="Dear P.H."/>
            <person name="Noegel A.A."/>
            <person name="Barrell B.G."/>
            <person name="Kuspa A."/>
        </authorList>
    </citation>
    <scope>NUCLEOTIDE SEQUENCE [LARGE SCALE GENOMIC DNA]</scope>
    <source>
        <strain>AX4</strain>
    </source>
</reference>
<sequence>MFKSFNGLELKSSENEGRYLIATRDIQIGEDLLKCKSYFAVTSETLKTTSCFNCIKQLPSVIKLSLKCNQCNEIWYCNEQCKNENINKHQHYECKFYKKLKSPKLKVYPNFDIETFTEIRMIVGLLSRYYQDILLNNKFIEQQLNNNNNNNNDNEQLTNTLDDVFDLVENQVTEESNPAAKERIDSIVEFISELFNLVLLGSTTTKSIINNDDKIEMIRKINEKSRSIIHKTRCNQFGIWTKNDKCIGVAVSPSSSYFNHSCIPNCTDVRDGSNMTFKSLYPIKKGDQLTISYIELDQPIQDRKDELKYGYYFDCICPRCNGDSNSIDSMDNWISKFYCSQKKCTGLYYSKPMIPILNTLTSNHEIQLSCSNCNNINIVTPSFFNK</sequence>
<accession>Q557F7</accession>
<accession>Q86HY5</accession>
<gene>
    <name type="ORF">DDB_G0273589</name>
</gene>
<dbReference type="EC" id="2.1.1.-"/>
<dbReference type="EMBL" id="AAFI02000011">
    <property type="protein sequence ID" value="EAL70485.1"/>
    <property type="molecule type" value="Genomic_DNA"/>
</dbReference>
<dbReference type="EMBL" id="AAFI02000009">
    <property type="protein sequence ID" value="EAL70844.1"/>
    <property type="molecule type" value="Genomic_DNA"/>
</dbReference>
<dbReference type="RefSeq" id="XP_644411.1">
    <property type="nucleotide sequence ID" value="XM_639319.1"/>
</dbReference>
<dbReference type="RefSeq" id="XP_644839.1">
    <property type="nucleotide sequence ID" value="XM_639747.1"/>
</dbReference>
<dbReference type="SMR" id="Q557F7"/>
<dbReference type="PaxDb" id="44689-DDB0220708"/>
<dbReference type="EnsemblProtists" id="EAL70485">
    <property type="protein sequence ID" value="EAL70485"/>
    <property type="gene ID" value="DDB_G0273589"/>
</dbReference>
<dbReference type="EnsemblProtists" id="EAL70844">
    <property type="protein sequence ID" value="EAL70844"/>
    <property type="gene ID" value="DDB_G0273253"/>
</dbReference>
<dbReference type="GeneID" id="8619036"/>
<dbReference type="KEGG" id="ddi:DDB_G0273253"/>
<dbReference type="KEGG" id="ddi:DDB_G0273589"/>
<dbReference type="dictyBase" id="DDB_G0273253"/>
<dbReference type="dictyBase" id="DDB_G0273589"/>
<dbReference type="VEuPathDB" id="AmoebaDB:DDB_G0273589"/>
<dbReference type="eggNOG" id="KOG2084">
    <property type="taxonomic scope" value="Eukaryota"/>
</dbReference>
<dbReference type="HOGENOM" id="CLU_702894_0_0_1"/>
<dbReference type="InParanoid" id="Q557F7"/>
<dbReference type="OMA" id="ERCVCEK"/>
<dbReference type="PhylomeDB" id="Q557F7"/>
<dbReference type="Reactome" id="R-DDI-3214841">
    <property type="pathway name" value="PKMTs methylate histone lysines"/>
</dbReference>
<dbReference type="PRO" id="PR:Q557F7"/>
<dbReference type="Proteomes" id="UP000002195">
    <property type="component" value="Chromosome 2"/>
</dbReference>
<dbReference type="GO" id="GO:0005634">
    <property type="term" value="C:nucleus"/>
    <property type="evidence" value="ECO:0000318"/>
    <property type="project" value="GO_Central"/>
</dbReference>
<dbReference type="GO" id="GO:0008168">
    <property type="term" value="F:methyltransferase activity"/>
    <property type="evidence" value="ECO:0007669"/>
    <property type="project" value="UniProtKB-KW"/>
</dbReference>
<dbReference type="GO" id="GO:0008270">
    <property type="term" value="F:zinc ion binding"/>
    <property type="evidence" value="ECO:0007669"/>
    <property type="project" value="UniProtKB-KW"/>
</dbReference>
<dbReference type="GO" id="GO:0032259">
    <property type="term" value="P:methylation"/>
    <property type="evidence" value="ECO:0007669"/>
    <property type="project" value="UniProtKB-KW"/>
</dbReference>
<dbReference type="Gene3D" id="1.10.220.160">
    <property type="match status" value="1"/>
</dbReference>
<dbReference type="Gene3D" id="6.10.140.2220">
    <property type="match status" value="1"/>
</dbReference>
<dbReference type="Gene3D" id="2.170.270.10">
    <property type="entry name" value="SET domain"/>
    <property type="match status" value="1"/>
</dbReference>
<dbReference type="InterPro" id="IPR050869">
    <property type="entry name" value="H3K4_H4K5_MeTrfase"/>
</dbReference>
<dbReference type="InterPro" id="IPR001214">
    <property type="entry name" value="SET_dom"/>
</dbReference>
<dbReference type="InterPro" id="IPR046341">
    <property type="entry name" value="SET_dom_sf"/>
</dbReference>
<dbReference type="InterPro" id="IPR002893">
    <property type="entry name" value="Znf_MYND"/>
</dbReference>
<dbReference type="PANTHER" id="PTHR12197:SF251">
    <property type="entry name" value="EG:BACR7C10.4 PROTEIN"/>
    <property type="match status" value="1"/>
</dbReference>
<dbReference type="PANTHER" id="PTHR12197">
    <property type="entry name" value="HISTONE-LYSINE N-METHYLTRANSFERASE SMYD"/>
    <property type="match status" value="1"/>
</dbReference>
<dbReference type="Pfam" id="PF00856">
    <property type="entry name" value="SET"/>
    <property type="match status" value="1"/>
</dbReference>
<dbReference type="SMART" id="SM00317">
    <property type="entry name" value="SET"/>
    <property type="match status" value="1"/>
</dbReference>
<dbReference type="SUPFAM" id="SSF144232">
    <property type="entry name" value="HIT/MYND zinc finger-like"/>
    <property type="match status" value="1"/>
</dbReference>
<dbReference type="SUPFAM" id="SSF82199">
    <property type="entry name" value="SET domain"/>
    <property type="match status" value="1"/>
</dbReference>
<dbReference type="PROSITE" id="PS50280">
    <property type="entry name" value="SET"/>
    <property type="match status" value="1"/>
</dbReference>
<dbReference type="PROSITE" id="PS01360">
    <property type="entry name" value="ZF_MYND_1"/>
    <property type="match status" value="1"/>
</dbReference>
<protein>
    <recommendedName>
        <fullName>SET and MYND domain-containing protein DDB_G0273589</fullName>
        <ecNumber>2.1.1.-</ecNumber>
    </recommendedName>
</protein>
<feature type="chain" id="PRO_0000389432" description="SET and MYND domain-containing protein DDB_G0273589">
    <location>
        <begin position="1"/>
        <end position="386"/>
    </location>
</feature>
<feature type="domain" description="SET" evidence="3">
    <location>
        <begin position="6"/>
        <end position="294"/>
    </location>
</feature>
<feature type="zinc finger region" description="MYND-type">
    <location>
        <begin position="51"/>
        <end position="94"/>
    </location>
</feature>
<feature type="coiled-coil region" evidence="2">
    <location>
        <begin position="136"/>
        <end position="171"/>
    </location>
</feature>
<comment type="function">
    <text evidence="1">Probable methyltransferase.</text>
</comment>
<comment type="similarity">
    <text evidence="3">Belongs to the class V-like SAM-binding methyltransferase superfamily.</text>
</comment>
<proteinExistence type="inferred from homology"/>
<keyword id="KW-0175">Coiled coil</keyword>
<keyword id="KW-0479">Metal-binding</keyword>
<keyword id="KW-0489">Methyltransferase</keyword>
<keyword id="KW-1185">Reference proteome</keyword>
<keyword id="KW-0949">S-adenosyl-L-methionine</keyword>
<keyword id="KW-0808">Transferase</keyword>
<keyword id="KW-0862">Zinc</keyword>
<keyword id="KW-0863">Zinc-finger</keyword>
<name>Y3589_DICDI</name>
<evidence type="ECO:0000250" key="1"/>
<evidence type="ECO:0000255" key="2"/>
<evidence type="ECO:0000255" key="3">
    <source>
        <dbReference type="PROSITE-ProRule" id="PRU00190"/>
    </source>
</evidence>
<organism>
    <name type="scientific">Dictyostelium discoideum</name>
    <name type="common">Social amoeba</name>
    <dbReference type="NCBI Taxonomy" id="44689"/>
    <lineage>
        <taxon>Eukaryota</taxon>
        <taxon>Amoebozoa</taxon>
        <taxon>Evosea</taxon>
        <taxon>Eumycetozoa</taxon>
        <taxon>Dictyostelia</taxon>
        <taxon>Dictyosteliales</taxon>
        <taxon>Dictyosteliaceae</taxon>
        <taxon>Dictyostelium</taxon>
    </lineage>
</organism>